<keyword id="KW-0997">Cell inner membrane</keyword>
<keyword id="KW-1003">Cell membrane</keyword>
<keyword id="KW-0378">Hydrolase</keyword>
<keyword id="KW-0472">Membrane</keyword>
<keyword id="KW-0479">Metal-binding</keyword>
<keyword id="KW-0482">Metalloprotease</keyword>
<keyword id="KW-0645">Protease</keyword>
<keyword id="KW-1185">Reference proteome</keyword>
<keyword id="KW-0812">Transmembrane</keyword>
<keyword id="KW-1133">Transmembrane helix</keyword>
<keyword id="KW-0862">Zinc</keyword>
<evidence type="ECO:0000255" key="1">
    <source>
        <dbReference type="HAMAP-Rule" id="MF_00188"/>
    </source>
</evidence>
<gene>
    <name evidence="1" type="primary">htpX</name>
    <name type="ordered locus">Ppha_1962</name>
</gene>
<comment type="cofactor">
    <cofactor evidence="1">
        <name>Zn(2+)</name>
        <dbReference type="ChEBI" id="CHEBI:29105"/>
    </cofactor>
    <text evidence="1">Binds 1 zinc ion per subunit.</text>
</comment>
<comment type="subcellular location">
    <subcellularLocation>
        <location evidence="1">Cell inner membrane</location>
        <topology evidence="1">Multi-pass membrane protein</topology>
    </subcellularLocation>
</comment>
<comment type="similarity">
    <text evidence="1">Belongs to the peptidase M48B family.</text>
</comment>
<protein>
    <recommendedName>
        <fullName evidence="1">Protease HtpX homolog</fullName>
        <ecNumber evidence="1">3.4.24.-</ecNumber>
    </recommendedName>
</protein>
<reference key="1">
    <citation type="submission" date="2008-06" db="EMBL/GenBank/DDBJ databases">
        <title>Complete sequence of Pelodictyon phaeoclathratiforme BU-1.</title>
        <authorList>
            <consortium name="US DOE Joint Genome Institute"/>
            <person name="Lucas S."/>
            <person name="Copeland A."/>
            <person name="Lapidus A."/>
            <person name="Glavina del Rio T."/>
            <person name="Dalin E."/>
            <person name="Tice H."/>
            <person name="Bruce D."/>
            <person name="Goodwin L."/>
            <person name="Pitluck S."/>
            <person name="Schmutz J."/>
            <person name="Larimer F."/>
            <person name="Land M."/>
            <person name="Hauser L."/>
            <person name="Kyrpides N."/>
            <person name="Mikhailova N."/>
            <person name="Liu Z."/>
            <person name="Li T."/>
            <person name="Zhao F."/>
            <person name="Overmann J."/>
            <person name="Bryant D.A."/>
            <person name="Richardson P."/>
        </authorList>
    </citation>
    <scope>NUCLEOTIDE SEQUENCE [LARGE SCALE GENOMIC DNA]</scope>
    <source>
        <strain>DSM 5477 / BU-1</strain>
    </source>
</reference>
<name>HTPX_PELPB</name>
<sequence>MKRVILFLLTNFAVMLVLSVTARILGVDRFLTSNGLNMGMLLVFAALIGFGGSFISLLMSKTMAKWSTGAQVIKQPSSQEEVWLVETVRRLSTKAGFAMPEVAIYDGAPNAFATGPSKSRSLVAVSTGLLHSMDRKQVEAVLAHEVSHINNGDMVTLTLIQGVLNTFVIFLSRIIAYAVDSFLRRDEDESGSPGIGYWISSIACEILFGILASIVVMFFSRKREYRADAGAAALMGDRRPMIDALRALGNLDAGQLPKEMAASGIAGGGMMALFSSHPPLESRIAALESAR</sequence>
<accession>B4SCH3</accession>
<proteinExistence type="inferred from homology"/>
<organism>
    <name type="scientific">Pelodictyon phaeoclathratiforme (strain DSM 5477 / BU-1)</name>
    <dbReference type="NCBI Taxonomy" id="324925"/>
    <lineage>
        <taxon>Bacteria</taxon>
        <taxon>Pseudomonadati</taxon>
        <taxon>Chlorobiota</taxon>
        <taxon>Chlorobiia</taxon>
        <taxon>Chlorobiales</taxon>
        <taxon>Chlorobiaceae</taxon>
        <taxon>Chlorobium/Pelodictyon group</taxon>
        <taxon>Pelodictyon</taxon>
    </lineage>
</organism>
<dbReference type="EC" id="3.4.24.-" evidence="1"/>
<dbReference type="EMBL" id="CP001110">
    <property type="protein sequence ID" value="ACF44178.1"/>
    <property type="molecule type" value="Genomic_DNA"/>
</dbReference>
<dbReference type="RefSeq" id="WP_012508659.1">
    <property type="nucleotide sequence ID" value="NC_011060.1"/>
</dbReference>
<dbReference type="SMR" id="B4SCH3"/>
<dbReference type="STRING" id="324925.Ppha_1962"/>
<dbReference type="MEROPS" id="M48.002"/>
<dbReference type="KEGG" id="pph:Ppha_1962"/>
<dbReference type="eggNOG" id="COG0501">
    <property type="taxonomic scope" value="Bacteria"/>
</dbReference>
<dbReference type="HOGENOM" id="CLU_042266_1_0_10"/>
<dbReference type="OrthoDB" id="9810445at2"/>
<dbReference type="Proteomes" id="UP000002724">
    <property type="component" value="Chromosome"/>
</dbReference>
<dbReference type="GO" id="GO:0005886">
    <property type="term" value="C:plasma membrane"/>
    <property type="evidence" value="ECO:0007669"/>
    <property type="project" value="UniProtKB-SubCell"/>
</dbReference>
<dbReference type="GO" id="GO:0004222">
    <property type="term" value="F:metalloendopeptidase activity"/>
    <property type="evidence" value="ECO:0007669"/>
    <property type="project" value="UniProtKB-UniRule"/>
</dbReference>
<dbReference type="GO" id="GO:0008270">
    <property type="term" value="F:zinc ion binding"/>
    <property type="evidence" value="ECO:0007669"/>
    <property type="project" value="UniProtKB-UniRule"/>
</dbReference>
<dbReference type="GO" id="GO:0006508">
    <property type="term" value="P:proteolysis"/>
    <property type="evidence" value="ECO:0007669"/>
    <property type="project" value="UniProtKB-KW"/>
</dbReference>
<dbReference type="CDD" id="cd07335">
    <property type="entry name" value="M48B_HtpX_like"/>
    <property type="match status" value="1"/>
</dbReference>
<dbReference type="Gene3D" id="3.30.2010.10">
    <property type="entry name" value="Metalloproteases ('zincins'), catalytic domain"/>
    <property type="match status" value="1"/>
</dbReference>
<dbReference type="HAMAP" id="MF_00188">
    <property type="entry name" value="Pept_M48_protease_HtpX"/>
    <property type="match status" value="1"/>
</dbReference>
<dbReference type="InterPro" id="IPR050083">
    <property type="entry name" value="HtpX_protease"/>
</dbReference>
<dbReference type="InterPro" id="IPR022919">
    <property type="entry name" value="Pept_M48_protease_HtpX"/>
</dbReference>
<dbReference type="InterPro" id="IPR001915">
    <property type="entry name" value="Peptidase_M48"/>
</dbReference>
<dbReference type="NCBIfam" id="NF003965">
    <property type="entry name" value="PRK05457.1"/>
    <property type="match status" value="1"/>
</dbReference>
<dbReference type="PANTHER" id="PTHR43221">
    <property type="entry name" value="PROTEASE HTPX"/>
    <property type="match status" value="1"/>
</dbReference>
<dbReference type="PANTHER" id="PTHR43221:SF1">
    <property type="entry name" value="PROTEASE HTPX"/>
    <property type="match status" value="1"/>
</dbReference>
<dbReference type="Pfam" id="PF01435">
    <property type="entry name" value="Peptidase_M48"/>
    <property type="match status" value="1"/>
</dbReference>
<feature type="chain" id="PRO_1000098830" description="Protease HtpX homolog">
    <location>
        <begin position="1"/>
        <end position="291"/>
    </location>
</feature>
<feature type="transmembrane region" description="Helical" evidence="1">
    <location>
        <begin position="4"/>
        <end position="24"/>
    </location>
</feature>
<feature type="transmembrane region" description="Helical" evidence="1">
    <location>
        <begin position="38"/>
        <end position="58"/>
    </location>
</feature>
<feature type="transmembrane region" description="Helical" evidence="1">
    <location>
        <begin position="159"/>
        <end position="179"/>
    </location>
</feature>
<feature type="transmembrane region" description="Helical" evidence="1">
    <location>
        <begin position="199"/>
        <end position="219"/>
    </location>
</feature>
<feature type="active site" evidence="1">
    <location>
        <position position="145"/>
    </location>
</feature>
<feature type="binding site" evidence="1">
    <location>
        <position position="144"/>
    </location>
    <ligand>
        <name>Zn(2+)</name>
        <dbReference type="ChEBI" id="CHEBI:29105"/>
        <note>catalytic</note>
    </ligand>
</feature>
<feature type="binding site" evidence="1">
    <location>
        <position position="148"/>
    </location>
    <ligand>
        <name>Zn(2+)</name>
        <dbReference type="ChEBI" id="CHEBI:29105"/>
        <note>catalytic</note>
    </ligand>
</feature>
<feature type="binding site" evidence="1">
    <location>
        <position position="224"/>
    </location>
    <ligand>
        <name>Zn(2+)</name>
        <dbReference type="ChEBI" id="CHEBI:29105"/>
        <note>catalytic</note>
    </ligand>
</feature>